<organism>
    <name type="scientific">Arabidopsis thaliana</name>
    <name type="common">Mouse-ear cress</name>
    <dbReference type="NCBI Taxonomy" id="3702"/>
    <lineage>
        <taxon>Eukaryota</taxon>
        <taxon>Viridiplantae</taxon>
        <taxon>Streptophyta</taxon>
        <taxon>Embryophyta</taxon>
        <taxon>Tracheophyta</taxon>
        <taxon>Spermatophyta</taxon>
        <taxon>Magnoliopsida</taxon>
        <taxon>eudicotyledons</taxon>
        <taxon>Gunneridae</taxon>
        <taxon>Pentapetalae</taxon>
        <taxon>rosids</taxon>
        <taxon>malvids</taxon>
        <taxon>Brassicales</taxon>
        <taxon>Brassicaceae</taxon>
        <taxon>Camelineae</taxon>
        <taxon>Arabidopsis</taxon>
    </lineage>
</organism>
<sequence>MKEIQIPRKSFARSSELGAKRLKDPEMKNRKVTTEKRQIATFSDVSFESTKDPMDFSPISQISGAISDSEAESVIQGSSLDLMSTPEICLPADDSPVSTITSVEARIDTSSTDRIQSIVDLPASVQSLRGEINELKKLICSVDNSAEINWVDRVVTVKFRIVLLSFILWAILAAIVVFFSSGEERAYRGPLPT</sequence>
<name>SINE3_ARATH</name>
<accession>Q9C900</accession>
<evidence type="ECO:0000255" key="1"/>
<evidence type="ECO:0000256" key="2">
    <source>
        <dbReference type="SAM" id="MobiDB-lite"/>
    </source>
</evidence>
<evidence type="ECO:0000269" key="3">
    <source>
    </source>
</evidence>
<evidence type="ECO:0000303" key="4">
    <source>
    </source>
</evidence>
<evidence type="ECO:0000305" key="5">
    <source>
    </source>
</evidence>
<evidence type="ECO:0000312" key="6">
    <source>
        <dbReference type="Araport" id="AT3G06600"/>
    </source>
</evidence>
<evidence type="ECO:0000312" key="7">
    <source>
        <dbReference type="EMBL" id="AAG51336.1"/>
    </source>
</evidence>
<protein>
    <recommendedName>
        <fullName evidence="4">Protein SINE3</fullName>
    </recommendedName>
</protein>
<dbReference type="EMBL" id="AC020580">
    <property type="protein sequence ID" value="AAG51336.1"/>
    <property type="molecule type" value="Genomic_DNA"/>
</dbReference>
<dbReference type="EMBL" id="CP002686">
    <property type="protein sequence ID" value="AEE74420.1"/>
    <property type="molecule type" value="Genomic_DNA"/>
</dbReference>
<dbReference type="EMBL" id="CP002686">
    <property type="protein sequence ID" value="AEE74421.1"/>
    <property type="molecule type" value="Genomic_DNA"/>
</dbReference>
<dbReference type="EMBL" id="CP002686">
    <property type="protein sequence ID" value="ANM65878.1"/>
    <property type="molecule type" value="Genomic_DNA"/>
</dbReference>
<dbReference type="EMBL" id="AY600562">
    <property type="protein sequence ID" value="AAT68361.1"/>
    <property type="molecule type" value="mRNA"/>
</dbReference>
<dbReference type="EMBL" id="AY649298">
    <property type="protein sequence ID" value="AAT69215.1"/>
    <property type="molecule type" value="mRNA"/>
</dbReference>
<dbReference type="RefSeq" id="NP_001118593.1">
    <property type="nucleotide sequence ID" value="NM_001125121.2"/>
</dbReference>
<dbReference type="RefSeq" id="NP_001327815.1">
    <property type="nucleotide sequence ID" value="NM_001337666.1"/>
</dbReference>
<dbReference type="RefSeq" id="NP_187312.1">
    <property type="nucleotide sequence ID" value="NM_111536.3"/>
</dbReference>
<dbReference type="FunCoup" id="Q9C900">
    <property type="interactions" value="2"/>
</dbReference>
<dbReference type="IntAct" id="Q9C900">
    <property type="interactions" value="16"/>
</dbReference>
<dbReference type="STRING" id="3702.Q9C900"/>
<dbReference type="PaxDb" id="3702-AT3G06600.2"/>
<dbReference type="ProteomicsDB" id="228437"/>
<dbReference type="EnsemblPlants" id="AT3G06600.1">
    <property type="protein sequence ID" value="AT3G06600.1"/>
    <property type="gene ID" value="AT3G06600"/>
</dbReference>
<dbReference type="EnsemblPlants" id="AT3G06600.2">
    <property type="protein sequence ID" value="AT3G06600.2"/>
    <property type="gene ID" value="AT3G06600"/>
</dbReference>
<dbReference type="EnsemblPlants" id="AT3G06600.3">
    <property type="protein sequence ID" value="AT3G06600.3"/>
    <property type="gene ID" value="AT3G06600"/>
</dbReference>
<dbReference type="GeneID" id="819839"/>
<dbReference type="Gramene" id="AT3G06600.1">
    <property type="protein sequence ID" value="AT3G06600.1"/>
    <property type="gene ID" value="AT3G06600"/>
</dbReference>
<dbReference type="Gramene" id="AT3G06600.2">
    <property type="protein sequence ID" value="AT3G06600.2"/>
    <property type="gene ID" value="AT3G06600"/>
</dbReference>
<dbReference type="Gramene" id="AT3G06600.3">
    <property type="protein sequence ID" value="AT3G06600.3"/>
    <property type="gene ID" value="AT3G06600"/>
</dbReference>
<dbReference type="KEGG" id="ath:AT3G06600"/>
<dbReference type="Araport" id="AT3G06600"/>
<dbReference type="TAIR" id="AT3G06600">
    <property type="gene designation" value="SINE3"/>
</dbReference>
<dbReference type="eggNOG" id="ENOG502R7KV">
    <property type="taxonomic scope" value="Eukaryota"/>
</dbReference>
<dbReference type="HOGENOM" id="CLU_1410599_0_0_1"/>
<dbReference type="InParanoid" id="Q9C900"/>
<dbReference type="OMA" id="HEERNCL"/>
<dbReference type="OrthoDB" id="1063472at2759"/>
<dbReference type="PhylomeDB" id="Q9C900"/>
<dbReference type="PRO" id="PR:Q9C900"/>
<dbReference type="Proteomes" id="UP000006548">
    <property type="component" value="Chromosome 3"/>
</dbReference>
<dbReference type="ExpressionAtlas" id="Q9C900">
    <property type="expression patterns" value="baseline and differential"/>
</dbReference>
<dbReference type="GO" id="GO:0005635">
    <property type="term" value="C:nuclear envelope"/>
    <property type="evidence" value="ECO:0000314"/>
    <property type="project" value="TAIR"/>
</dbReference>
<dbReference type="GO" id="GO:0031965">
    <property type="term" value="C:nuclear membrane"/>
    <property type="evidence" value="ECO:0007669"/>
    <property type="project" value="UniProtKB-SubCell"/>
</dbReference>
<keyword id="KW-0472">Membrane</keyword>
<keyword id="KW-0539">Nucleus</keyword>
<keyword id="KW-1185">Reference proteome</keyword>
<keyword id="KW-0812">Transmembrane</keyword>
<keyword id="KW-1133">Transmembrane helix</keyword>
<reference key="1">
    <citation type="journal article" date="2000" name="Nature">
        <title>Sequence and analysis of chromosome 3 of the plant Arabidopsis thaliana.</title>
        <authorList>
            <person name="Salanoubat M."/>
            <person name="Lemcke K."/>
            <person name="Rieger M."/>
            <person name="Ansorge W."/>
            <person name="Unseld M."/>
            <person name="Fartmann B."/>
            <person name="Valle G."/>
            <person name="Bloecker H."/>
            <person name="Perez-Alonso M."/>
            <person name="Obermaier B."/>
            <person name="Delseny M."/>
            <person name="Boutry M."/>
            <person name="Grivell L.A."/>
            <person name="Mache R."/>
            <person name="Puigdomenech P."/>
            <person name="De Simone V."/>
            <person name="Choisne N."/>
            <person name="Artiguenave F."/>
            <person name="Robert C."/>
            <person name="Brottier P."/>
            <person name="Wincker P."/>
            <person name="Cattolico L."/>
            <person name="Weissenbach J."/>
            <person name="Saurin W."/>
            <person name="Quetier F."/>
            <person name="Schaefer M."/>
            <person name="Mueller-Auer S."/>
            <person name="Gabel C."/>
            <person name="Fuchs M."/>
            <person name="Benes V."/>
            <person name="Wurmbach E."/>
            <person name="Drzonek H."/>
            <person name="Erfle H."/>
            <person name="Jordan N."/>
            <person name="Bangert S."/>
            <person name="Wiedelmann R."/>
            <person name="Kranz H."/>
            <person name="Voss H."/>
            <person name="Holland R."/>
            <person name="Brandt P."/>
            <person name="Nyakatura G."/>
            <person name="Vezzi A."/>
            <person name="D'Angelo M."/>
            <person name="Pallavicini A."/>
            <person name="Toppo S."/>
            <person name="Simionati B."/>
            <person name="Conrad A."/>
            <person name="Hornischer K."/>
            <person name="Kauer G."/>
            <person name="Loehnert T.-H."/>
            <person name="Nordsiek G."/>
            <person name="Reichelt J."/>
            <person name="Scharfe M."/>
            <person name="Schoen O."/>
            <person name="Bargues M."/>
            <person name="Terol J."/>
            <person name="Climent J."/>
            <person name="Navarro P."/>
            <person name="Collado C."/>
            <person name="Perez-Perez A."/>
            <person name="Ottenwaelder B."/>
            <person name="Duchemin D."/>
            <person name="Cooke R."/>
            <person name="Laudie M."/>
            <person name="Berger-Llauro C."/>
            <person name="Purnelle B."/>
            <person name="Masuy D."/>
            <person name="de Haan M."/>
            <person name="Maarse A.C."/>
            <person name="Alcaraz J.-P."/>
            <person name="Cottet A."/>
            <person name="Casacuberta E."/>
            <person name="Monfort A."/>
            <person name="Argiriou A."/>
            <person name="Flores M."/>
            <person name="Liguori R."/>
            <person name="Vitale D."/>
            <person name="Mannhaupt G."/>
            <person name="Haase D."/>
            <person name="Schoof H."/>
            <person name="Rudd S."/>
            <person name="Zaccaria P."/>
            <person name="Mewes H.-W."/>
            <person name="Mayer K.F.X."/>
            <person name="Kaul S."/>
            <person name="Town C.D."/>
            <person name="Koo H.L."/>
            <person name="Tallon L.J."/>
            <person name="Jenkins J."/>
            <person name="Rooney T."/>
            <person name="Rizzo M."/>
            <person name="Walts A."/>
            <person name="Utterback T."/>
            <person name="Fujii C.Y."/>
            <person name="Shea T.P."/>
            <person name="Creasy T.H."/>
            <person name="Haas B."/>
            <person name="Maiti R."/>
            <person name="Wu D."/>
            <person name="Peterson J."/>
            <person name="Van Aken S."/>
            <person name="Pai G."/>
            <person name="Militscher J."/>
            <person name="Sellers P."/>
            <person name="Gill J.E."/>
            <person name="Feldblyum T.V."/>
            <person name="Preuss D."/>
            <person name="Lin X."/>
            <person name="Nierman W.C."/>
            <person name="Salzberg S.L."/>
            <person name="White O."/>
            <person name="Venter J.C."/>
            <person name="Fraser C.M."/>
            <person name="Kaneko T."/>
            <person name="Nakamura Y."/>
            <person name="Sato S."/>
            <person name="Kato T."/>
            <person name="Asamizu E."/>
            <person name="Sasamoto S."/>
            <person name="Kimura T."/>
            <person name="Idesawa K."/>
            <person name="Kawashima K."/>
            <person name="Kishida Y."/>
            <person name="Kiyokawa C."/>
            <person name="Kohara M."/>
            <person name="Matsumoto M."/>
            <person name="Matsuno A."/>
            <person name="Muraki A."/>
            <person name="Nakayama S."/>
            <person name="Nakazaki N."/>
            <person name="Shinpo S."/>
            <person name="Takeuchi C."/>
            <person name="Wada T."/>
            <person name="Watanabe A."/>
            <person name="Yamada M."/>
            <person name="Yasuda M."/>
            <person name="Tabata S."/>
        </authorList>
    </citation>
    <scope>NUCLEOTIDE SEQUENCE [LARGE SCALE GENOMIC DNA]</scope>
    <source>
        <strain>cv. Columbia</strain>
    </source>
</reference>
<reference key="2">
    <citation type="journal article" date="2017" name="Plant J.">
        <title>Araport11: a complete reannotation of the Arabidopsis thaliana reference genome.</title>
        <authorList>
            <person name="Cheng C.Y."/>
            <person name="Krishnakumar V."/>
            <person name="Chan A.P."/>
            <person name="Thibaud-Nissen F."/>
            <person name="Schobel S."/>
            <person name="Town C.D."/>
        </authorList>
    </citation>
    <scope>GENOME REANNOTATION</scope>
    <source>
        <strain>cv. Columbia</strain>
    </source>
</reference>
<reference key="3">
    <citation type="submission" date="2004-04" db="EMBL/GenBank/DDBJ databases">
        <title>Reconstruction of cDNA sequences for hypothetical genes in Arabidopsis thaliana from 5' and 3' RACE products.</title>
        <authorList>
            <person name="Xiao Y.-L."/>
            <person name="Underwood B.A."/>
            <person name="Moskal W.A. Jr."/>
            <person name="Torian U."/>
            <person name="Redman J.C."/>
            <person name="Wu H.C."/>
            <person name="Utterback T."/>
            <person name="Town C.D."/>
        </authorList>
    </citation>
    <scope>NUCLEOTIDE SEQUENCE [LARGE SCALE MRNA]</scope>
    <source>
        <strain>cv. Columbia</strain>
    </source>
</reference>
<reference key="4">
    <citation type="submission" date="2004-06" db="EMBL/GenBank/DDBJ databases">
        <authorList>
            <person name="Underwood B.A."/>
            <person name="Xiao Y.-L."/>
            <person name="Moskal W.A. Jr."/>
            <person name="Monaghan E.L."/>
            <person name="Wang W."/>
            <person name="Redman J.C."/>
            <person name="Wu H.C."/>
            <person name="Utterback T."/>
            <person name="Town C.D."/>
        </authorList>
    </citation>
    <scope>NUCLEOTIDE SEQUENCE [LARGE SCALE MRNA]</scope>
    <source>
        <strain>cv. Columbia</strain>
    </source>
</reference>
<reference key="5">
    <citation type="journal article" date="2014" name="J. Cell Biol.">
        <title>Identification of unique SUN-interacting nuclear envelope proteins with diverse functions in plants.</title>
        <authorList>
            <person name="Zhou X."/>
            <person name="Graumann K."/>
            <person name="Wirthmueller L."/>
            <person name="Jones J.D."/>
            <person name="Meier I."/>
        </authorList>
    </citation>
    <scope>GENE FAMILY</scope>
    <scope>NOMENCLATURE</scope>
    <scope>SUBCELLULAR LOCATION</scope>
    <scope>INTERACTION WITH SINE1 AND SINE2</scope>
</reference>
<reference key="6">
    <citation type="journal article" date="2015" name="J. Exp. Bot.">
        <title>The plant nuclear envelope as a multifunctional platform LINCed by SUN and KASH.</title>
        <authorList>
            <person name="Zhou X."/>
            <person name="Graumann K."/>
            <person name="Meier I."/>
        </authorList>
    </citation>
    <scope>REVIEW</scope>
</reference>
<feature type="chain" id="PRO_0000441683" description="Protein SINE3">
    <location>
        <begin position="1"/>
        <end position="193"/>
    </location>
</feature>
<feature type="transmembrane region" description="Helical" evidence="1">
    <location>
        <begin position="161"/>
        <end position="181"/>
    </location>
</feature>
<feature type="domain" description="KASH" evidence="5">
    <location>
        <begin position="155"/>
        <end position="193"/>
    </location>
</feature>
<feature type="region of interest" description="Disordered" evidence="2">
    <location>
        <begin position="15"/>
        <end position="35"/>
    </location>
</feature>
<feature type="short sequence motif" description="Required for nuclear localization" evidence="3">
    <location>
        <begin position="190"/>
        <end position="193"/>
    </location>
</feature>
<feature type="compositionally biased region" description="Basic and acidic residues" evidence="2">
    <location>
        <begin position="18"/>
        <end position="35"/>
    </location>
</feature>
<comment type="subunit">
    <text evidence="3">Interacts with SUN1 and SUN2.</text>
</comment>
<comment type="subcellular location">
    <subcellularLocation>
        <location evidence="3">Nucleus membrane</location>
        <topology evidence="1">Single-pass membrane protein</topology>
    </subcellularLocation>
</comment>
<comment type="domain">
    <text evidence="5">The KASH domain, which contains a transmembrane domain, mediates the nuclear envelope targeting and is involved in the binding to the SUN proteins.</text>
</comment>
<proteinExistence type="evidence at protein level"/>
<gene>
    <name evidence="4" type="primary">SINE3</name>
    <name evidence="6" type="ordered locus">At3g06600</name>
    <name evidence="7" type="ORF">F5E6.7</name>
</gene>